<feature type="chain" id="PRO_1000140373" description="L-rhamnonate dehydratase">
    <location>
        <begin position="1"/>
        <end position="405"/>
    </location>
</feature>
<feature type="active site" description="Proton acceptor" evidence="1">
    <location>
        <position position="329"/>
    </location>
</feature>
<feature type="binding site" evidence="1">
    <location>
        <position position="33"/>
    </location>
    <ligand>
        <name>substrate</name>
    </ligand>
</feature>
<feature type="binding site" evidence="1">
    <location>
        <position position="59"/>
    </location>
    <ligand>
        <name>substrate</name>
    </ligand>
</feature>
<feature type="binding site" evidence="1">
    <location>
        <position position="226"/>
    </location>
    <ligand>
        <name>Mg(2+)</name>
        <dbReference type="ChEBI" id="CHEBI:18420"/>
    </ligand>
</feature>
<feature type="binding site" evidence="1">
    <location>
        <position position="252"/>
    </location>
    <ligand>
        <name>Mg(2+)</name>
        <dbReference type="ChEBI" id="CHEBI:18420"/>
    </ligand>
</feature>
<feature type="binding site" evidence="1">
    <location>
        <position position="280"/>
    </location>
    <ligand>
        <name>Mg(2+)</name>
        <dbReference type="ChEBI" id="CHEBI:18420"/>
    </ligand>
</feature>
<feature type="binding site" evidence="1">
    <location>
        <position position="349"/>
    </location>
    <ligand>
        <name>substrate</name>
    </ligand>
</feature>
<feature type="site" description="Increases basicity of active site His" evidence="1">
    <location>
        <position position="302"/>
    </location>
</feature>
<feature type="site" description="Transition state stabilizer" evidence="1">
    <location>
        <position position="349"/>
    </location>
</feature>
<evidence type="ECO:0000255" key="1">
    <source>
        <dbReference type="HAMAP-Rule" id="MF_01288"/>
    </source>
</evidence>
<proteinExistence type="inferred from homology"/>
<protein>
    <recommendedName>
        <fullName evidence="1">L-rhamnonate dehydratase</fullName>
        <shortName evidence="1">RhamD</shortName>
        <ecNumber evidence="1">4.2.1.90</ecNumber>
    </recommendedName>
</protein>
<sequence>MENIMTLPKIKQVRAWFTGGATAEKGAGGGDYHDQGANHWIDDHIATPMSKYREYEQSRQSFGINVLGTLIVEVEAENGQTGFAVSTAGEMGCFIVEKHLNRFIEGKCVSDIKLIHDQMLNATLYYSGSGGLVMNTISCVDLALWDLFGKVVGLPVYKLLGGAVRDEIQFYATGARPDLAKEMGFIGGKMPTHWGPHDGDAGIRKDAAMVADMREKCGEDFWLMLDCWMSQDVNYAIKLAHACAPYNLKWIEECLPPQQYEGYRELKHNAPAGMMVTSGEHHGTLQSFRTLSETGIDIMQPDVGWCGGLTTLVEIAAIAKSRGQLVVPHGSSVYSHHAVITFTNTPFSEFLMTSPDCSTMRPQFDPILLNEPVPVNGRIHKSVLDKPGFGVELNRDCNLNPPYSH</sequence>
<reference key="1">
    <citation type="journal article" date="2009" name="PLoS Genet.">
        <title>Organised genome dynamics in the Escherichia coli species results in highly diverse adaptive paths.</title>
        <authorList>
            <person name="Touchon M."/>
            <person name="Hoede C."/>
            <person name="Tenaillon O."/>
            <person name="Barbe V."/>
            <person name="Baeriswyl S."/>
            <person name="Bidet P."/>
            <person name="Bingen E."/>
            <person name="Bonacorsi S."/>
            <person name="Bouchier C."/>
            <person name="Bouvet O."/>
            <person name="Calteau A."/>
            <person name="Chiapello H."/>
            <person name="Clermont O."/>
            <person name="Cruveiller S."/>
            <person name="Danchin A."/>
            <person name="Diard M."/>
            <person name="Dossat C."/>
            <person name="Karoui M.E."/>
            <person name="Frapy E."/>
            <person name="Garry L."/>
            <person name="Ghigo J.M."/>
            <person name="Gilles A.M."/>
            <person name="Johnson J."/>
            <person name="Le Bouguenec C."/>
            <person name="Lescat M."/>
            <person name="Mangenot S."/>
            <person name="Martinez-Jehanne V."/>
            <person name="Matic I."/>
            <person name="Nassif X."/>
            <person name="Oztas S."/>
            <person name="Petit M.A."/>
            <person name="Pichon C."/>
            <person name="Rouy Z."/>
            <person name="Ruf C.S."/>
            <person name="Schneider D."/>
            <person name="Tourret J."/>
            <person name="Vacherie B."/>
            <person name="Vallenet D."/>
            <person name="Medigue C."/>
            <person name="Rocha E.P.C."/>
            <person name="Denamur E."/>
        </authorList>
    </citation>
    <scope>NUCLEOTIDE SEQUENCE [LARGE SCALE GENOMIC DNA]</scope>
    <source>
        <strain>ED1a</strain>
    </source>
</reference>
<comment type="function">
    <text evidence="1">Catalyzes the dehydration of L-rhamnonate to 2-keto-3-deoxy-L-rhamnonate (KDR).</text>
</comment>
<comment type="catalytic activity">
    <reaction evidence="1">
        <text>L-rhamnonate = 2-dehydro-3-deoxy-L-rhamnonate + H2O</text>
        <dbReference type="Rhea" id="RHEA:23080"/>
        <dbReference type="ChEBI" id="CHEBI:15377"/>
        <dbReference type="ChEBI" id="CHEBI:58118"/>
        <dbReference type="ChEBI" id="CHEBI:58371"/>
        <dbReference type="EC" id="4.2.1.90"/>
    </reaction>
</comment>
<comment type="cofactor">
    <cofactor evidence="1">
        <name>Mg(2+)</name>
        <dbReference type="ChEBI" id="CHEBI:18420"/>
    </cofactor>
    <text evidence="1">Binds 1 Mg(2+) ion per subunit.</text>
</comment>
<comment type="subunit">
    <text evidence="1">Homooctamer; tetramer of dimers.</text>
</comment>
<comment type="miscellaneous">
    <text evidence="1">Reaction proceeds via a syn dehydration.</text>
</comment>
<comment type="similarity">
    <text evidence="1">Belongs to the mandelate racemase/muconate lactonizing enzyme family. RhamD subfamily.</text>
</comment>
<dbReference type="EC" id="4.2.1.90" evidence="1"/>
<dbReference type="EMBL" id="CU928162">
    <property type="protein sequence ID" value="CAR08894.2"/>
    <property type="molecule type" value="Genomic_DNA"/>
</dbReference>
<dbReference type="SMR" id="B7MXS8"/>
<dbReference type="KEGG" id="ecq:ECED1_2713"/>
<dbReference type="HOGENOM" id="CLU_030273_1_0_6"/>
<dbReference type="Proteomes" id="UP000000748">
    <property type="component" value="Chromosome"/>
</dbReference>
<dbReference type="GO" id="GO:0050032">
    <property type="term" value="F:L-rhamnonate dehydratase activity"/>
    <property type="evidence" value="ECO:0007669"/>
    <property type="project" value="UniProtKB-UniRule"/>
</dbReference>
<dbReference type="GO" id="GO:0000287">
    <property type="term" value="F:magnesium ion binding"/>
    <property type="evidence" value="ECO:0007669"/>
    <property type="project" value="UniProtKB-UniRule"/>
</dbReference>
<dbReference type="GO" id="GO:0009063">
    <property type="term" value="P:amino acid catabolic process"/>
    <property type="evidence" value="ECO:0007669"/>
    <property type="project" value="InterPro"/>
</dbReference>
<dbReference type="GO" id="GO:0016052">
    <property type="term" value="P:carbohydrate catabolic process"/>
    <property type="evidence" value="ECO:0007669"/>
    <property type="project" value="TreeGrafter"/>
</dbReference>
<dbReference type="CDD" id="cd03327">
    <property type="entry name" value="MR_like_2"/>
    <property type="match status" value="1"/>
</dbReference>
<dbReference type="FunFam" id="3.30.390.10:FF:000007">
    <property type="entry name" value="L-rhamnonate dehydratase"/>
    <property type="match status" value="1"/>
</dbReference>
<dbReference type="FunFam" id="3.20.20.120:FF:000005">
    <property type="entry name" value="Putative L-rhamnonate dehydratase"/>
    <property type="match status" value="1"/>
</dbReference>
<dbReference type="Gene3D" id="3.20.20.120">
    <property type="entry name" value="Enolase-like C-terminal domain"/>
    <property type="match status" value="1"/>
</dbReference>
<dbReference type="Gene3D" id="3.30.390.10">
    <property type="entry name" value="Enolase-like, N-terminal domain"/>
    <property type="match status" value="1"/>
</dbReference>
<dbReference type="HAMAP" id="MF_01288">
    <property type="entry name" value="Rhamnon_dehydrat"/>
    <property type="match status" value="1"/>
</dbReference>
<dbReference type="InterPro" id="IPR036849">
    <property type="entry name" value="Enolase-like_C_sf"/>
</dbReference>
<dbReference type="InterPro" id="IPR029017">
    <property type="entry name" value="Enolase-like_N"/>
</dbReference>
<dbReference type="InterPro" id="IPR029065">
    <property type="entry name" value="Enolase_C-like"/>
</dbReference>
<dbReference type="InterPro" id="IPR023444">
    <property type="entry name" value="L-Rhamnon_dehydrat"/>
</dbReference>
<dbReference type="InterPro" id="IPR018110">
    <property type="entry name" value="Mandel_Rmase/mucon_lact_enz_CS"/>
</dbReference>
<dbReference type="InterPro" id="IPR013342">
    <property type="entry name" value="Mandelate_racemase_C"/>
</dbReference>
<dbReference type="InterPro" id="IPR013341">
    <property type="entry name" value="Mandelate_racemase_N_dom"/>
</dbReference>
<dbReference type="InterPro" id="IPR046945">
    <property type="entry name" value="RHMD-like"/>
</dbReference>
<dbReference type="NCBIfam" id="NF011968">
    <property type="entry name" value="PRK15440.1"/>
    <property type="match status" value="1"/>
</dbReference>
<dbReference type="PANTHER" id="PTHR13794">
    <property type="entry name" value="ENOLASE SUPERFAMILY, MANDELATE RACEMASE"/>
    <property type="match status" value="1"/>
</dbReference>
<dbReference type="PANTHER" id="PTHR13794:SF58">
    <property type="entry name" value="MITOCHONDRIAL ENOLASE SUPERFAMILY MEMBER 1"/>
    <property type="match status" value="1"/>
</dbReference>
<dbReference type="Pfam" id="PF13378">
    <property type="entry name" value="MR_MLE_C"/>
    <property type="match status" value="1"/>
</dbReference>
<dbReference type="Pfam" id="PF02746">
    <property type="entry name" value="MR_MLE_N"/>
    <property type="match status" value="1"/>
</dbReference>
<dbReference type="SFLD" id="SFLDS00001">
    <property type="entry name" value="Enolase"/>
    <property type="match status" value="1"/>
</dbReference>
<dbReference type="SFLD" id="SFLDF00006">
    <property type="entry name" value="rhamnonate_dehydratase"/>
    <property type="match status" value="1"/>
</dbReference>
<dbReference type="SMART" id="SM00922">
    <property type="entry name" value="MR_MLE"/>
    <property type="match status" value="1"/>
</dbReference>
<dbReference type="SUPFAM" id="SSF51604">
    <property type="entry name" value="Enolase C-terminal domain-like"/>
    <property type="match status" value="1"/>
</dbReference>
<dbReference type="SUPFAM" id="SSF54826">
    <property type="entry name" value="Enolase N-terminal domain-like"/>
    <property type="match status" value="1"/>
</dbReference>
<dbReference type="PROSITE" id="PS00908">
    <property type="entry name" value="MR_MLE_1"/>
    <property type="match status" value="1"/>
</dbReference>
<gene>
    <name evidence="1" type="primary">rhmD</name>
    <name type="ordered locus">ECED1_2713</name>
</gene>
<name>RHMD_ECO81</name>
<keyword id="KW-0456">Lyase</keyword>
<keyword id="KW-0460">Magnesium</keyword>
<keyword id="KW-0479">Metal-binding</keyword>
<organism>
    <name type="scientific">Escherichia coli O81 (strain ED1a)</name>
    <dbReference type="NCBI Taxonomy" id="585397"/>
    <lineage>
        <taxon>Bacteria</taxon>
        <taxon>Pseudomonadati</taxon>
        <taxon>Pseudomonadota</taxon>
        <taxon>Gammaproteobacteria</taxon>
        <taxon>Enterobacterales</taxon>
        <taxon>Enterobacteriaceae</taxon>
        <taxon>Escherichia</taxon>
    </lineage>
</organism>
<accession>B7MXS8</accession>